<reference key="1">
    <citation type="journal article" date="1999" name="Nature">
        <title>The DNA sequence of human chromosome 22.</title>
        <authorList>
            <person name="Dunham I."/>
            <person name="Hunt A.R."/>
            <person name="Collins J.E."/>
            <person name="Bruskiewich R."/>
            <person name="Beare D.M."/>
            <person name="Clamp M."/>
            <person name="Smink L.J."/>
            <person name="Ainscough R."/>
            <person name="Almeida J.P."/>
            <person name="Babbage A.K."/>
            <person name="Bagguley C."/>
            <person name="Bailey J."/>
            <person name="Barlow K.F."/>
            <person name="Bates K.N."/>
            <person name="Beasley O.P."/>
            <person name="Bird C.P."/>
            <person name="Blakey S.E."/>
            <person name="Bridgeman A.M."/>
            <person name="Buck D."/>
            <person name="Burgess J."/>
            <person name="Burrill W.D."/>
            <person name="Burton J."/>
            <person name="Carder C."/>
            <person name="Carter N.P."/>
            <person name="Chen Y."/>
            <person name="Clark G."/>
            <person name="Clegg S.M."/>
            <person name="Cobley V.E."/>
            <person name="Cole C.G."/>
            <person name="Collier R.E."/>
            <person name="Connor R."/>
            <person name="Conroy D."/>
            <person name="Corby N.R."/>
            <person name="Coville G.J."/>
            <person name="Cox A.V."/>
            <person name="Davis J."/>
            <person name="Dawson E."/>
            <person name="Dhami P.D."/>
            <person name="Dockree C."/>
            <person name="Dodsworth S.J."/>
            <person name="Durbin R.M."/>
            <person name="Ellington A.G."/>
            <person name="Evans K.L."/>
            <person name="Fey J.M."/>
            <person name="Fleming K."/>
            <person name="French L."/>
            <person name="Garner A.A."/>
            <person name="Gilbert J.G.R."/>
            <person name="Goward M.E."/>
            <person name="Grafham D.V."/>
            <person name="Griffiths M.N.D."/>
            <person name="Hall C."/>
            <person name="Hall R.E."/>
            <person name="Hall-Tamlyn G."/>
            <person name="Heathcott R.W."/>
            <person name="Ho S."/>
            <person name="Holmes S."/>
            <person name="Hunt S.E."/>
            <person name="Jones M.C."/>
            <person name="Kershaw J."/>
            <person name="Kimberley A.M."/>
            <person name="King A."/>
            <person name="Laird G.K."/>
            <person name="Langford C.F."/>
            <person name="Leversha M.A."/>
            <person name="Lloyd C."/>
            <person name="Lloyd D.M."/>
            <person name="Martyn I.D."/>
            <person name="Mashreghi-Mohammadi M."/>
            <person name="Matthews L.H."/>
            <person name="Mccann O.T."/>
            <person name="Mcclay J."/>
            <person name="Mclaren S."/>
            <person name="McMurray A.A."/>
            <person name="Milne S.A."/>
            <person name="Mortimore B.J."/>
            <person name="Odell C.N."/>
            <person name="Pavitt R."/>
            <person name="Pearce A.V."/>
            <person name="Pearson D."/>
            <person name="Phillimore B.J.C.T."/>
            <person name="Phillips S.H."/>
            <person name="Plumb R.W."/>
            <person name="Ramsay H."/>
            <person name="Ramsey Y."/>
            <person name="Rogers L."/>
            <person name="Ross M.T."/>
            <person name="Scott C.E."/>
            <person name="Sehra H.K."/>
            <person name="Skuce C.D."/>
            <person name="Smalley S."/>
            <person name="Smith M.L."/>
            <person name="Soderlund C."/>
            <person name="Spragon L."/>
            <person name="Steward C.A."/>
            <person name="Sulston J.E."/>
            <person name="Swann R.M."/>
            <person name="Vaudin M."/>
            <person name="Wall M."/>
            <person name="Wallis J.M."/>
            <person name="Whiteley M.N."/>
            <person name="Willey D.L."/>
            <person name="Williams L."/>
            <person name="Williams S.A."/>
            <person name="Williamson H."/>
            <person name="Wilmer T.E."/>
            <person name="Wilming L."/>
            <person name="Wright C.L."/>
            <person name="Hubbard T."/>
            <person name="Bentley D.R."/>
            <person name="Beck S."/>
            <person name="Rogers J."/>
            <person name="Shimizu N."/>
            <person name="Minoshima S."/>
            <person name="Kawasaki K."/>
            <person name="Sasaki T."/>
            <person name="Asakawa S."/>
            <person name="Kudoh J."/>
            <person name="Shintani A."/>
            <person name="Shibuya K."/>
            <person name="Yoshizaki Y."/>
            <person name="Aoki N."/>
            <person name="Mitsuyama S."/>
            <person name="Roe B.A."/>
            <person name="Chen F."/>
            <person name="Chu L."/>
            <person name="Crabtree J."/>
            <person name="Deschamps S."/>
            <person name="Do A."/>
            <person name="Do T."/>
            <person name="Dorman A."/>
            <person name="Fang F."/>
            <person name="Fu Y."/>
            <person name="Hu P."/>
            <person name="Hua A."/>
            <person name="Kenton S."/>
            <person name="Lai H."/>
            <person name="Lao H.I."/>
            <person name="Lewis J."/>
            <person name="Lewis S."/>
            <person name="Lin S.-P."/>
            <person name="Loh P."/>
            <person name="Malaj E."/>
            <person name="Nguyen T."/>
            <person name="Pan H."/>
            <person name="Phan S."/>
            <person name="Qi S."/>
            <person name="Qian Y."/>
            <person name="Ray L."/>
            <person name="Ren Q."/>
            <person name="Shaull S."/>
            <person name="Sloan D."/>
            <person name="Song L."/>
            <person name="Wang Q."/>
            <person name="Wang Y."/>
            <person name="Wang Z."/>
            <person name="White J."/>
            <person name="Willingham D."/>
            <person name="Wu H."/>
            <person name="Yao Z."/>
            <person name="Zhan M."/>
            <person name="Zhang G."/>
            <person name="Chissoe S."/>
            <person name="Murray J."/>
            <person name="Miller N."/>
            <person name="Minx P."/>
            <person name="Fulton R."/>
            <person name="Johnson D."/>
            <person name="Bemis G."/>
            <person name="Bentley D."/>
            <person name="Bradshaw H."/>
            <person name="Bourne S."/>
            <person name="Cordes M."/>
            <person name="Du Z."/>
            <person name="Fulton L."/>
            <person name="Goela D."/>
            <person name="Graves T."/>
            <person name="Hawkins J."/>
            <person name="Hinds K."/>
            <person name="Kemp K."/>
            <person name="Latreille P."/>
            <person name="Layman D."/>
            <person name="Ozersky P."/>
            <person name="Rohlfing T."/>
            <person name="Scheet P."/>
            <person name="Walker C."/>
            <person name="Wamsley A."/>
            <person name="Wohldmann P."/>
            <person name="Pepin K."/>
            <person name="Nelson J."/>
            <person name="Korf I."/>
            <person name="Bedell J.A."/>
            <person name="Hillier L.W."/>
            <person name="Mardis E."/>
            <person name="Waterston R."/>
            <person name="Wilson R."/>
            <person name="Emanuel B.S."/>
            <person name="Shaikh T."/>
            <person name="Kurahashi H."/>
            <person name="Saitta S."/>
            <person name="Budarf M.L."/>
            <person name="McDermid H.E."/>
            <person name="Johnson A."/>
            <person name="Wong A.C.C."/>
            <person name="Morrow B.E."/>
            <person name="Edelmann L."/>
            <person name="Kim U.J."/>
            <person name="Shizuya H."/>
            <person name="Simon M.I."/>
            <person name="Dumanski J.P."/>
            <person name="Peyrard M."/>
            <person name="Kedra D."/>
            <person name="Seroussi E."/>
            <person name="Fransson I."/>
            <person name="Tapia I."/>
            <person name="Bruder C.E."/>
            <person name="O'Brien K.P."/>
            <person name="Wilkinson P."/>
            <person name="Bodenteich A."/>
            <person name="Hartman K."/>
            <person name="Hu X."/>
            <person name="Khan A.S."/>
            <person name="Lane L."/>
            <person name="Tilahun Y."/>
            <person name="Wright H."/>
        </authorList>
    </citation>
    <scope>NUCLEOTIDE SEQUENCE [LARGE SCALE GENOMIC DNA]</scope>
</reference>
<reference key="2">
    <citation type="journal article" date="2001" name="Genome Res.">
        <title>Analysis of the cat eye syndrome critical region in humans and the region of conserved synteny in mice: a search for candidate genes at or near the human chromosome 22 pericentromere.</title>
        <authorList>
            <person name="Footz T.K."/>
            <person name="Brinkman-Mills P."/>
            <person name="Banting G.S."/>
            <person name="Maier S.A."/>
            <person name="Riazi M.A."/>
            <person name="Bridgland L.J."/>
            <person name="Hu S."/>
            <person name="Birren B."/>
            <person name="Minoshima S."/>
            <person name="Shimizu N."/>
            <person name="Pan H."/>
            <person name="Nguyen T."/>
            <person name="Fang F."/>
            <person name="Fu Y."/>
            <person name="Ray L."/>
            <person name="Wu H."/>
            <person name="Shaull S."/>
            <person name="Phan S."/>
            <person name="Yao Z."/>
            <person name="Chen F."/>
            <person name="Huan A."/>
            <person name="Hu P."/>
            <person name="Wang Q."/>
            <person name="Loh P."/>
            <person name="Qi S."/>
            <person name="Roe B.A."/>
            <person name="McDermid H.E."/>
        </authorList>
    </citation>
    <scope>NUCLEOTIDE SEQUENCE [MRNA] OF 136-200</scope>
    <scope>TISSUE SPECIFICITY</scope>
</reference>
<feature type="signal peptide" evidence="1">
    <location>
        <begin position="1"/>
        <end position="23"/>
    </location>
</feature>
<feature type="chain" id="PRO_0000347336" description="Putative cat eye syndrome critical region protein 9">
    <location>
        <begin position="24"/>
        <end position="216"/>
    </location>
</feature>
<feature type="glycosylation site" description="N-linked (GlcNAc...) asparagine" evidence="1">
    <location>
        <position position="148"/>
    </location>
</feature>
<organism>
    <name type="scientific">Homo sapiens</name>
    <name type="common">Human</name>
    <dbReference type="NCBI Taxonomy" id="9606"/>
    <lineage>
        <taxon>Eukaryota</taxon>
        <taxon>Metazoa</taxon>
        <taxon>Chordata</taxon>
        <taxon>Craniata</taxon>
        <taxon>Vertebrata</taxon>
        <taxon>Euteleostomi</taxon>
        <taxon>Mammalia</taxon>
        <taxon>Eutheria</taxon>
        <taxon>Euarchontoglires</taxon>
        <taxon>Primates</taxon>
        <taxon>Haplorrhini</taxon>
        <taxon>Catarrhini</taxon>
        <taxon>Hominidae</taxon>
        <taxon>Homo</taxon>
    </lineage>
</organism>
<keyword id="KW-0325">Glycoprotein</keyword>
<keyword id="KW-1185">Reference proteome</keyword>
<keyword id="KW-0964">Secreted</keyword>
<keyword id="KW-0732">Signal</keyword>
<accession>P0C854</accession>
<sequence>MQSHLAPLACAAAAGRAGGSCQAAQPEDRRVLRYPGTAVMVTCPNRPLVPRPLLTPGGSRASLALCAFVAVPQRIPQPLLPAYILLMLPSLVVDMALPSSRLLRSIKPIQPASQVVRKERNPNPNCPQSDPLMKASSTSFLSHTYLINKTRSTTRKVEEHSWFTCTGAKYFAIPLAERNTKRLTKRSTHAQLLRGKQDGSEWVVPRSSASSNVLYH</sequence>
<comment type="subcellular location">
    <subcellularLocation>
        <location evidence="3">Secreted</location>
    </subcellularLocation>
</comment>
<comment type="tissue specificity">
    <text evidence="2">Ubiquitously expressed with higher expression in heart.</text>
</comment>
<comment type="miscellaneous">
    <text>Candidate gene for the Cat Eye Syndrome (CES), a developmental disorder associated with the duplication of a 2 Mb region of 22q11.2. Duplication usually takes in the form of a surpernumerary bisatellited isodicentric chromosome, resulting in four copies of the region (represents an inv dup(22)(q11)). CES is characterized clinically by the combination of coloboma of the iris and anal atresia with fistula, downslanting palpebral fissures, preauricular tags and/or pits, frequent occurrence of heart and renal malformations, and normal or near-normal mental development.</text>
</comment>
<comment type="caution">
    <text evidence="3">Product of a dubious gene prediction.</text>
</comment>
<protein>
    <recommendedName>
        <fullName>Putative cat eye syndrome critical region protein 9</fullName>
    </recommendedName>
</protein>
<name>CECR9_HUMAN</name>
<proteinExistence type="uncertain"/>
<gene>
    <name type="primary">CECR9</name>
</gene>
<dbReference type="EMBL" id="AC005399">
    <property type="status" value="NOT_ANNOTATED_CDS"/>
    <property type="molecule type" value="Genomic_DNA"/>
</dbReference>
<dbReference type="EMBL" id="AF307449">
    <property type="status" value="NOT_ANNOTATED_CDS"/>
    <property type="molecule type" value="mRNA"/>
</dbReference>
<dbReference type="GlyCosmos" id="P0C854">
    <property type="glycosylation" value="1 site, No reported glycans"/>
</dbReference>
<dbReference type="GlyGen" id="P0C854">
    <property type="glycosylation" value="1 site"/>
</dbReference>
<dbReference type="BioMuta" id="HGNC:1847"/>
<dbReference type="ProteomicsDB" id="52397"/>
<dbReference type="AGR" id="HGNC:1847"/>
<dbReference type="GeneCards" id="CECR9"/>
<dbReference type="HGNC" id="HGNC:1847">
    <property type="gene designation" value="CECR9"/>
</dbReference>
<dbReference type="neXtProt" id="NX_P0C854"/>
<dbReference type="InParanoid" id="P0C854"/>
<dbReference type="PAN-GO" id="P0C854">
    <property type="GO annotations" value="0 GO annotations based on evolutionary models"/>
</dbReference>
<dbReference type="Pharos" id="P0C854">
    <property type="development level" value="Tdark"/>
</dbReference>
<dbReference type="Proteomes" id="UP000005640">
    <property type="component" value="Unplaced"/>
</dbReference>
<dbReference type="RNAct" id="P0C854">
    <property type="molecule type" value="protein"/>
</dbReference>
<dbReference type="GO" id="GO:0005576">
    <property type="term" value="C:extracellular region"/>
    <property type="evidence" value="ECO:0007669"/>
    <property type="project" value="UniProtKB-SubCell"/>
</dbReference>
<evidence type="ECO:0000255" key="1"/>
<evidence type="ECO:0000269" key="2">
    <source>
    </source>
</evidence>
<evidence type="ECO:0000305" key="3"/>